<dbReference type="EC" id="2.3.1.39"/>
<dbReference type="EMBL" id="AL009126">
    <property type="protein sequence ID" value="CAB13584.3"/>
    <property type="molecule type" value="Genomic_DNA"/>
</dbReference>
<dbReference type="RefSeq" id="NP_389593.3">
    <property type="nucleotide sequence ID" value="NC_000964.3"/>
</dbReference>
<dbReference type="PDB" id="5DZ7">
    <property type="method" value="X-ray"/>
    <property type="resolution" value="2.50 A"/>
    <property type="chains" value="A=1-288"/>
</dbReference>
<dbReference type="PDBsum" id="5DZ7"/>
<dbReference type="SMR" id="O34787"/>
<dbReference type="FunCoup" id="O34787">
    <property type="interactions" value="14"/>
</dbReference>
<dbReference type="STRING" id="224308.BSU17120"/>
<dbReference type="PaxDb" id="224308-BSU17120"/>
<dbReference type="EnsemblBacteria" id="CAB13584">
    <property type="protein sequence ID" value="CAB13584"/>
    <property type="gene ID" value="BSU_17120"/>
</dbReference>
<dbReference type="GeneID" id="939997"/>
<dbReference type="KEGG" id="bsu:BSU17120"/>
<dbReference type="PATRIC" id="fig|224308.179.peg.1857"/>
<dbReference type="eggNOG" id="COG0331">
    <property type="taxonomic scope" value="Bacteria"/>
</dbReference>
<dbReference type="eggNOG" id="COG2070">
    <property type="taxonomic scope" value="Bacteria"/>
</dbReference>
<dbReference type="InParanoid" id="O34787"/>
<dbReference type="OrthoDB" id="9805460at2"/>
<dbReference type="PhylomeDB" id="O34787"/>
<dbReference type="BioCyc" id="BSUB:BSU17120-MONOMER"/>
<dbReference type="UniPathway" id="UPA01003"/>
<dbReference type="Proteomes" id="UP000001570">
    <property type="component" value="Chromosome"/>
</dbReference>
<dbReference type="GO" id="GO:0005829">
    <property type="term" value="C:cytosol"/>
    <property type="evidence" value="ECO:0000318"/>
    <property type="project" value="GO_Central"/>
</dbReference>
<dbReference type="GO" id="GO:0004314">
    <property type="term" value="F:[acyl-carrier-protein] S-malonyltransferase activity"/>
    <property type="evidence" value="ECO:0000318"/>
    <property type="project" value="GO_Central"/>
</dbReference>
<dbReference type="GO" id="GO:0017000">
    <property type="term" value="P:antibiotic biosynthetic process"/>
    <property type="evidence" value="ECO:0007669"/>
    <property type="project" value="UniProtKB-KW"/>
</dbReference>
<dbReference type="GO" id="GO:0006633">
    <property type="term" value="P:fatty acid biosynthetic process"/>
    <property type="evidence" value="ECO:0000318"/>
    <property type="project" value="GO_Central"/>
</dbReference>
<dbReference type="CDD" id="cd04742">
    <property type="entry name" value="NPD_FabD"/>
    <property type="match status" value="1"/>
</dbReference>
<dbReference type="FunFam" id="3.30.70.250:FF:000003">
    <property type="entry name" value="Polyketide beta-ketoacyl synthase Pks3"/>
    <property type="match status" value="1"/>
</dbReference>
<dbReference type="Gene3D" id="3.20.20.70">
    <property type="entry name" value="Aldolase class I"/>
    <property type="match status" value="1"/>
</dbReference>
<dbReference type="Gene3D" id="3.30.70.250">
    <property type="entry name" value="Malonyl-CoA ACP transacylase, ACP-binding"/>
    <property type="match status" value="1"/>
</dbReference>
<dbReference type="Gene3D" id="3.40.366.10">
    <property type="entry name" value="Malonyl-Coenzyme A Acyl Carrier Protein, domain 2"/>
    <property type="match status" value="1"/>
</dbReference>
<dbReference type="InterPro" id="IPR001227">
    <property type="entry name" value="Ac_transferase_dom_sf"/>
</dbReference>
<dbReference type="InterPro" id="IPR014043">
    <property type="entry name" value="Acyl_transferase_dom"/>
</dbReference>
<dbReference type="InterPro" id="IPR016035">
    <property type="entry name" value="Acyl_Trfase/lysoPLipase"/>
</dbReference>
<dbReference type="InterPro" id="IPR013785">
    <property type="entry name" value="Aldolase_TIM"/>
</dbReference>
<dbReference type="InterPro" id="IPR049489">
    <property type="entry name" value="FabD-like_helical_ins"/>
</dbReference>
<dbReference type="InterPro" id="IPR050858">
    <property type="entry name" value="Mal-CoA-ACP_Trans/PKS_FabD"/>
</dbReference>
<dbReference type="InterPro" id="IPR004410">
    <property type="entry name" value="Malonyl_CoA-ACP_transAc_FabD"/>
</dbReference>
<dbReference type="InterPro" id="IPR016036">
    <property type="entry name" value="Malonyl_transacylase_ACP-bd"/>
</dbReference>
<dbReference type="InterPro" id="IPR014179">
    <property type="entry name" value="PfaD-like_TIM-barrel"/>
</dbReference>
<dbReference type="NCBIfam" id="TIGR00128">
    <property type="entry name" value="fabD"/>
    <property type="match status" value="1"/>
</dbReference>
<dbReference type="NCBIfam" id="TIGR02814">
    <property type="entry name" value="pfaD_fam"/>
    <property type="match status" value="1"/>
</dbReference>
<dbReference type="PANTHER" id="PTHR42681">
    <property type="entry name" value="MALONYL-COA-ACYL CARRIER PROTEIN TRANSACYLASE, MITOCHONDRIAL"/>
    <property type="match status" value="1"/>
</dbReference>
<dbReference type="PANTHER" id="PTHR42681:SF1">
    <property type="entry name" value="MALONYL-COA-ACYL CARRIER PROTEIN TRANSACYLASE, MITOCHONDRIAL"/>
    <property type="match status" value="1"/>
</dbReference>
<dbReference type="Pfam" id="PF00698">
    <property type="entry name" value="Acyl_transf_1"/>
    <property type="match status" value="1"/>
</dbReference>
<dbReference type="Pfam" id="PF21607">
    <property type="entry name" value="FabD_helical_ins"/>
    <property type="match status" value="1"/>
</dbReference>
<dbReference type="Pfam" id="PF03060">
    <property type="entry name" value="NMO"/>
    <property type="match status" value="1"/>
</dbReference>
<dbReference type="SMART" id="SM00827">
    <property type="entry name" value="PKS_AT"/>
    <property type="match status" value="1"/>
</dbReference>
<dbReference type="SUPFAM" id="SSF52151">
    <property type="entry name" value="FabD/lysophospholipase-like"/>
    <property type="match status" value="1"/>
</dbReference>
<dbReference type="SUPFAM" id="SSF51395">
    <property type="entry name" value="FMN-linked oxidoreductases"/>
    <property type="match status" value="1"/>
</dbReference>
<dbReference type="SUPFAM" id="SSF55048">
    <property type="entry name" value="Probable ACP-binding domain of malonyl-CoA ACP transacylase"/>
    <property type="match status" value="1"/>
</dbReference>
<evidence type="ECO:0000250" key="1"/>
<evidence type="ECO:0000269" key="2">
    <source>
    </source>
</evidence>
<evidence type="ECO:0000269" key="3">
    <source>
    </source>
</evidence>
<evidence type="ECO:0000305" key="4"/>
<evidence type="ECO:0007829" key="5">
    <source>
        <dbReference type="PDB" id="5DZ7"/>
    </source>
</evidence>
<sequence>MITYVFPGQGSQQKGMGQGLFEQYQHLTDQADQILGYSIEKLCTEKSYLDVNHTEYTQPALYVVNALSYLKRVEETGRKPDFAAGHSLGEYNALMAAGAFDFETGLRLVKKRGELMGRITGGGMAAVIGLSKEQVTAVLEEHRLYDIDVANENTPQQIVISGPKKEIEKARAVFENTKDVKLFHPLNVSGAFHSRYMNEAKQVFKQYIDSFQFAPLAIPVISNVYAEPYHQDRLKDTLSEQMDNTVKWTDSIRFLMGRGEMEFAEIGPGTVLTGLIHRIKNEAEPLTYIPKKNPAISAHLKEQRNVQAGITAESLGSAEFKQDYHLTYAYLAGGMYRGIASKEMVVKLSRAGMMGFFGTGGLSLKEVEDAIHAIQGELGKGQAYGINLVHNMKHTESEEKMIDLLLRNQVSIVEASAFLSVTPVLVRYRAKGVKRNQNGDVICSNRLIAKISRPEVAESFLSPAPENMLQKLLGENKITMNEAELLRCIPMADDICVEADSGGHTDGGVAYSLMPAMTSLRDEMMKKYQYRKKIRVGAAGGIGTPEAAMAAFMLGADFILTGSINQCTVEAATSDKVKDLLQQMNVQDTAYAPAGDMFESGSKVQVLKKGVFFPARANKLYELYQRYGSIRELDAKMLAQLEEKYFKRSIEDIYKDIALHYPAADIEKAEQNPKHKMALIFRWYFRYSSKLAISGSEHSKVDYQIHCGPALGAFNQWVKGSQLENWRNRHVDEIGKKLMTETAVLLHERMQSMYQPSHETDNIKIKV</sequence>
<organism>
    <name type="scientific">Bacillus subtilis (strain 168)</name>
    <dbReference type="NCBI Taxonomy" id="224308"/>
    <lineage>
        <taxon>Bacteria</taxon>
        <taxon>Bacillati</taxon>
        <taxon>Bacillota</taxon>
        <taxon>Bacilli</taxon>
        <taxon>Bacillales</taxon>
        <taxon>Bacillaceae</taxon>
        <taxon>Bacillus</taxon>
    </lineage>
</organism>
<reference key="1">
    <citation type="journal article" date="1997" name="Nature">
        <title>The complete genome sequence of the Gram-positive bacterium Bacillus subtilis.</title>
        <authorList>
            <person name="Kunst F."/>
            <person name="Ogasawara N."/>
            <person name="Moszer I."/>
            <person name="Albertini A.M."/>
            <person name="Alloni G."/>
            <person name="Azevedo V."/>
            <person name="Bertero M.G."/>
            <person name="Bessieres P."/>
            <person name="Bolotin A."/>
            <person name="Borchert S."/>
            <person name="Borriss R."/>
            <person name="Boursier L."/>
            <person name="Brans A."/>
            <person name="Braun M."/>
            <person name="Brignell S.C."/>
            <person name="Bron S."/>
            <person name="Brouillet S."/>
            <person name="Bruschi C.V."/>
            <person name="Caldwell B."/>
            <person name="Capuano V."/>
            <person name="Carter N.M."/>
            <person name="Choi S.-K."/>
            <person name="Codani J.-J."/>
            <person name="Connerton I.F."/>
            <person name="Cummings N.J."/>
            <person name="Daniel R.A."/>
            <person name="Denizot F."/>
            <person name="Devine K.M."/>
            <person name="Duesterhoeft A."/>
            <person name="Ehrlich S.D."/>
            <person name="Emmerson P.T."/>
            <person name="Entian K.-D."/>
            <person name="Errington J."/>
            <person name="Fabret C."/>
            <person name="Ferrari E."/>
            <person name="Foulger D."/>
            <person name="Fritz C."/>
            <person name="Fujita M."/>
            <person name="Fujita Y."/>
            <person name="Fuma S."/>
            <person name="Galizzi A."/>
            <person name="Galleron N."/>
            <person name="Ghim S.-Y."/>
            <person name="Glaser P."/>
            <person name="Goffeau A."/>
            <person name="Golightly E.J."/>
            <person name="Grandi G."/>
            <person name="Guiseppi G."/>
            <person name="Guy B.J."/>
            <person name="Haga K."/>
            <person name="Haiech J."/>
            <person name="Harwood C.R."/>
            <person name="Henaut A."/>
            <person name="Hilbert H."/>
            <person name="Holsappel S."/>
            <person name="Hosono S."/>
            <person name="Hullo M.-F."/>
            <person name="Itaya M."/>
            <person name="Jones L.-M."/>
            <person name="Joris B."/>
            <person name="Karamata D."/>
            <person name="Kasahara Y."/>
            <person name="Klaerr-Blanchard M."/>
            <person name="Klein C."/>
            <person name="Kobayashi Y."/>
            <person name="Koetter P."/>
            <person name="Koningstein G."/>
            <person name="Krogh S."/>
            <person name="Kumano M."/>
            <person name="Kurita K."/>
            <person name="Lapidus A."/>
            <person name="Lardinois S."/>
            <person name="Lauber J."/>
            <person name="Lazarevic V."/>
            <person name="Lee S.-M."/>
            <person name="Levine A."/>
            <person name="Liu H."/>
            <person name="Masuda S."/>
            <person name="Mauel C."/>
            <person name="Medigue C."/>
            <person name="Medina N."/>
            <person name="Mellado R.P."/>
            <person name="Mizuno M."/>
            <person name="Moestl D."/>
            <person name="Nakai S."/>
            <person name="Noback M."/>
            <person name="Noone D."/>
            <person name="O'Reilly M."/>
            <person name="Ogawa K."/>
            <person name="Ogiwara A."/>
            <person name="Oudega B."/>
            <person name="Park S.-H."/>
            <person name="Parro V."/>
            <person name="Pohl T.M."/>
            <person name="Portetelle D."/>
            <person name="Porwollik S."/>
            <person name="Prescott A.M."/>
            <person name="Presecan E."/>
            <person name="Pujic P."/>
            <person name="Purnelle B."/>
            <person name="Rapoport G."/>
            <person name="Rey M."/>
            <person name="Reynolds S."/>
            <person name="Rieger M."/>
            <person name="Rivolta C."/>
            <person name="Rocha E."/>
            <person name="Roche B."/>
            <person name="Rose M."/>
            <person name="Sadaie Y."/>
            <person name="Sato T."/>
            <person name="Scanlan E."/>
            <person name="Schleich S."/>
            <person name="Schroeter R."/>
            <person name="Scoffone F."/>
            <person name="Sekiguchi J."/>
            <person name="Sekowska A."/>
            <person name="Seror S.J."/>
            <person name="Serror P."/>
            <person name="Shin B.-S."/>
            <person name="Soldo B."/>
            <person name="Sorokin A."/>
            <person name="Tacconi E."/>
            <person name="Takagi T."/>
            <person name="Takahashi H."/>
            <person name="Takemaru K."/>
            <person name="Takeuchi M."/>
            <person name="Tamakoshi A."/>
            <person name="Tanaka T."/>
            <person name="Terpstra P."/>
            <person name="Tognoni A."/>
            <person name="Tosato V."/>
            <person name="Uchiyama S."/>
            <person name="Vandenbol M."/>
            <person name="Vannier F."/>
            <person name="Vassarotti A."/>
            <person name="Viari A."/>
            <person name="Wambutt R."/>
            <person name="Wedler E."/>
            <person name="Wedler H."/>
            <person name="Weitzenegger T."/>
            <person name="Winters P."/>
            <person name="Wipat A."/>
            <person name="Yamamoto H."/>
            <person name="Yamane K."/>
            <person name="Yasumoto K."/>
            <person name="Yata K."/>
            <person name="Yoshida K."/>
            <person name="Yoshikawa H.-F."/>
            <person name="Zumstein E."/>
            <person name="Yoshikawa H."/>
            <person name="Danchin A."/>
        </authorList>
    </citation>
    <scope>NUCLEOTIDE SEQUENCE [LARGE SCALE GENOMIC DNA]</scope>
    <source>
        <strain>168</strain>
    </source>
</reference>
<reference key="2">
    <citation type="journal article" date="2009" name="Microbiology">
        <title>From a consortium sequence to a unified sequence: the Bacillus subtilis 168 reference genome a decade later.</title>
        <authorList>
            <person name="Barbe V."/>
            <person name="Cruveiller S."/>
            <person name="Kunst F."/>
            <person name="Lenoble P."/>
            <person name="Meurice G."/>
            <person name="Sekowska A."/>
            <person name="Vallenet D."/>
            <person name="Wang T."/>
            <person name="Moszer I."/>
            <person name="Medigue C."/>
            <person name="Danchin A."/>
        </authorList>
    </citation>
    <scope>SEQUENCE REVISION TO 99-129</scope>
</reference>
<reference key="3">
    <citation type="journal article" date="2007" name="Proc. Natl. Acad. Sci. U.S.A.">
        <title>A singular enzymatic megacomplex from Bacillus subtilis.</title>
        <authorList>
            <person name="Straight P.D."/>
            <person name="Fischbach M.A."/>
            <person name="Walsh C.T."/>
            <person name="Rudner D.Z."/>
            <person name="Kolter R."/>
        </authorList>
    </citation>
    <scope>SUBCELLULAR LOCATION</scope>
    <source>
        <strain>168 / Marburg / ATCC 6051 / DSM 10 / JCM 1465 / NBRC 13719 / NCIMB 3610 / NRRL NRS-744 / VKM B-501</strain>
    </source>
</reference>
<reference key="4">
    <citation type="journal article" date="2007" name="Proc. Natl. Acad. Sci. U.S.A.">
        <title>The identification of bacillaene, the product of the PksX megacomplex in Bacillus subtilis.</title>
        <authorList>
            <person name="Butcher R.A."/>
            <person name="Schroeder F.C."/>
            <person name="Fischbach M.A."/>
            <person name="Straight P.D."/>
            <person name="Kolter R."/>
            <person name="Walsh C.T."/>
            <person name="Clardy J."/>
        </authorList>
    </citation>
    <scope>FUNCTION IN BACILLAENE BIOSYNTHESIS</scope>
    <source>
        <strain>168 / Marburg / ATCC 6051 / DSM 10 / JCM 1465 / NBRC 13719 / NCIMB 3610 / NRRL NRS-744 / VKM B-501</strain>
    </source>
</reference>
<proteinExistence type="evidence at protein level"/>
<keyword id="KW-0002">3D-structure</keyword>
<keyword id="KW-0012">Acyltransferase</keyword>
<keyword id="KW-0045">Antibiotic biosynthesis</keyword>
<keyword id="KW-0963">Cytoplasm</keyword>
<keyword id="KW-1185">Reference proteome</keyword>
<keyword id="KW-0808">Transferase</keyword>
<protein>
    <recommendedName>
        <fullName>Polyketide biosynthesis protein PksE</fullName>
    </recommendedName>
    <domain>
        <recommendedName>
            <fullName>Malonyl CoA-acyl carrier protein transacylase</fullName>
            <shortName>MCT</shortName>
            <ecNumber>2.3.1.39</ecNumber>
        </recommendedName>
    </domain>
</protein>
<name>PKSE_BACSU</name>
<feature type="chain" id="PRO_0000388002" description="Polyketide biosynthesis protein PksE">
    <location>
        <begin position="1"/>
        <end position="767"/>
    </location>
</feature>
<feature type="region of interest" description="Acyl transferase">
    <location>
        <begin position="1"/>
        <end position="312"/>
    </location>
</feature>
<feature type="active site" evidence="1">
    <location>
        <position position="87"/>
    </location>
</feature>
<feature type="active site" evidence="1">
    <location>
        <position position="193"/>
    </location>
</feature>
<feature type="strand" evidence="5">
    <location>
        <begin position="2"/>
        <end position="6"/>
    </location>
</feature>
<feature type="turn" evidence="5">
    <location>
        <begin position="14"/>
        <end position="21"/>
    </location>
</feature>
<feature type="helix" evidence="5">
    <location>
        <begin position="22"/>
        <end position="24"/>
    </location>
</feature>
<feature type="helix" evidence="5">
    <location>
        <begin position="25"/>
        <end position="35"/>
    </location>
</feature>
<feature type="helix" evidence="5">
    <location>
        <begin position="39"/>
        <end position="44"/>
    </location>
</feature>
<feature type="helix" evidence="5">
    <location>
        <begin position="54"/>
        <end position="76"/>
    </location>
</feature>
<feature type="strand" evidence="5">
    <location>
        <begin position="81"/>
        <end position="86"/>
    </location>
</feature>
<feature type="helix" evidence="5">
    <location>
        <begin position="87"/>
        <end position="89"/>
    </location>
</feature>
<feature type="helix" evidence="5">
    <location>
        <begin position="90"/>
        <end position="96"/>
    </location>
</feature>
<feature type="helix" evidence="5">
    <location>
        <begin position="102"/>
        <end position="118"/>
    </location>
</feature>
<feature type="strand" evidence="5">
    <location>
        <begin position="121"/>
        <end position="130"/>
    </location>
</feature>
<feature type="helix" evidence="5">
    <location>
        <begin position="132"/>
        <end position="141"/>
    </location>
</feature>
<feature type="strand" evidence="5">
    <location>
        <begin position="148"/>
        <end position="154"/>
    </location>
</feature>
<feature type="strand" evidence="5">
    <location>
        <begin position="157"/>
        <end position="163"/>
    </location>
</feature>
<feature type="helix" evidence="5">
    <location>
        <begin position="164"/>
        <end position="174"/>
    </location>
</feature>
<feature type="strand" evidence="5">
    <location>
        <begin position="182"/>
        <end position="185"/>
    </location>
</feature>
<feature type="helix" evidence="5">
    <location>
        <begin position="195"/>
        <end position="197"/>
    </location>
</feature>
<feature type="helix" evidence="5">
    <location>
        <begin position="198"/>
        <end position="209"/>
    </location>
</feature>
<feature type="turn" evidence="5">
    <location>
        <begin position="223"/>
        <end position="225"/>
    </location>
</feature>
<feature type="strand" evidence="5">
    <location>
        <begin position="226"/>
        <end position="228"/>
    </location>
</feature>
<feature type="helix" evidence="5">
    <location>
        <begin position="234"/>
        <end position="239"/>
    </location>
</feature>
<feature type="helix" evidence="5">
    <location>
        <begin position="248"/>
        <end position="257"/>
    </location>
</feature>
<feature type="strand" evidence="5">
    <location>
        <begin position="262"/>
        <end position="265"/>
    </location>
</feature>
<feature type="strand" evidence="5">
    <location>
        <begin position="267"/>
        <end position="270"/>
    </location>
</feature>
<feature type="helix" evidence="5">
    <location>
        <begin position="271"/>
        <end position="280"/>
    </location>
</feature>
<comment type="function">
    <text evidence="3">Probably involved in some intermediate steps for the synthesis of the antibiotic polyketide bacillaene which is involved in secondary metabolism. Probably has an acyl transferase activity and could also have a flavin mononucleotide-dependent oxidoreductase activity.</text>
</comment>
<comment type="catalytic activity">
    <reaction>
        <text>holo-[ACP] + malonyl-CoA = malonyl-[ACP] + CoA</text>
        <dbReference type="Rhea" id="RHEA:41792"/>
        <dbReference type="Rhea" id="RHEA-COMP:9623"/>
        <dbReference type="Rhea" id="RHEA-COMP:9685"/>
        <dbReference type="ChEBI" id="CHEBI:57287"/>
        <dbReference type="ChEBI" id="CHEBI:57384"/>
        <dbReference type="ChEBI" id="CHEBI:64479"/>
        <dbReference type="ChEBI" id="CHEBI:78449"/>
        <dbReference type="EC" id="2.3.1.39"/>
    </reaction>
</comment>
<comment type="pathway">
    <text>Antibiotic biosynthesis; bacillaene biosynthesis.</text>
</comment>
<comment type="subcellular location">
    <subcellularLocation>
        <location evidence="2">Cytoplasm</location>
    </subcellularLocation>
</comment>
<comment type="similarity">
    <text evidence="4">In the N-terminal section; belongs to the FabD family.</text>
</comment>
<gene>
    <name type="primary">pksE</name>
    <name type="ordered locus">BSU17120</name>
</gene>
<accession>O34787</accession>